<name>GBRG2_RAT</name>
<evidence type="ECO:0000250" key="1">
    <source>
        <dbReference type="UniProtKB" id="P08219"/>
    </source>
</evidence>
<evidence type="ECO:0000250" key="2">
    <source>
        <dbReference type="UniProtKB" id="P18507"/>
    </source>
</evidence>
<evidence type="ECO:0000250" key="3">
    <source>
        <dbReference type="UniProtKB" id="P22723"/>
    </source>
</evidence>
<evidence type="ECO:0000255" key="4"/>
<evidence type="ECO:0000269" key="5">
    <source>
    </source>
</evidence>
<evidence type="ECO:0000269" key="6">
    <source>
    </source>
</evidence>
<evidence type="ECO:0000269" key="7">
    <source>
    </source>
</evidence>
<evidence type="ECO:0000269" key="8">
    <source>
    </source>
</evidence>
<evidence type="ECO:0000269" key="9">
    <source>
    </source>
</evidence>
<evidence type="ECO:0000269" key="10">
    <source>
    </source>
</evidence>
<evidence type="ECO:0000303" key="11">
    <source>
    </source>
</evidence>
<evidence type="ECO:0000305" key="12"/>
<evidence type="ECO:0000312" key="13">
    <source>
        <dbReference type="RGD" id="61966"/>
    </source>
</evidence>
<evidence type="ECO:0007744" key="14">
    <source>
        <dbReference type="PDB" id="6DW0"/>
    </source>
</evidence>
<evidence type="ECO:0007744" key="15">
    <source>
        <dbReference type="PDB" id="6DW1"/>
    </source>
</evidence>
<evidence type="ECO:0007829" key="16">
    <source>
        <dbReference type="PDB" id="6DW1"/>
    </source>
</evidence>
<organism>
    <name type="scientific">Rattus norvegicus</name>
    <name type="common">Rat</name>
    <dbReference type="NCBI Taxonomy" id="10116"/>
    <lineage>
        <taxon>Eukaryota</taxon>
        <taxon>Metazoa</taxon>
        <taxon>Chordata</taxon>
        <taxon>Craniata</taxon>
        <taxon>Vertebrata</taxon>
        <taxon>Euteleostomi</taxon>
        <taxon>Mammalia</taxon>
        <taxon>Eutheria</taxon>
        <taxon>Euarchontoglires</taxon>
        <taxon>Glires</taxon>
        <taxon>Rodentia</taxon>
        <taxon>Myomorpha</taxon>
        <taxon>Muroidea</taxon>
        <taxon>Muridae</taxon>
        <taxon>Murinae</taxon>
        <taxon>Rattus</taxon>
    </lineage>
</organism>
<proteinExistence type="evidence at protein level"/>
<comment type="function">
    <text evidence="1 2 3 7 9 10">Gamma subunit of the heteropentameric ligand-gated chloride channel gated by gamma-aminobutyric acid (GABA), a major inhibitory neurotransmitter in the brain (PubMed:2561970, PubMed:30044221). GABA-gated chloride channels, also named GABA(A) receptors (GABAAR), consist of five subunits arranged around a central pore and contain GABA active binding site(s) located at the alpha and beta subunit interface(s) (PubMed:30044221). When activated by GABA, GABAARs selectively allow the flow of chloride anions across the cell membrane down their electrochemical gradient (PubMed:2561970, PubMed:30044221). Gamma-2/GABRG2-containing GABAARs are found at both synaptic and extrasynaptic sites (PubMed:9464994). Chloride influx into the postsynaptic neuron following GABAAR opening decreases the neuron ability to generate a new action potential, thereby reducing nerve transmission (By similarity). GABAARs containing alpha-1 and beta-2 or -3 subunits exhibit synaptogenic activity; the gamma-2 subunit being necessary but not sufficient to induce rapid synaptic contacts formation (By similarity). Extrasynaptic gamma-2-containing receptors contribute to the tonic GABAergic inhibition (PubMed:9464994). GABAARs function also as histamine receptor where histamine binds at the interface of two neighboring beta subunits and potentiates GABA response in a gamma-2 subunit-controlled manner (By similarity).</text>
</comment>
<comment type="catalytic activity">
    <reaction evidence="7">
        <text>chloride(in) = chloride(out)</text>
        <dbReference type="Rhea" id="RHEA:29823"/>
        <dbReference type="ChEBI" id="CHEBI:17996"/>
    </reaction>
</comment>
<comment type="activity regulation">
    <text evidence="2 3 7">Allosterically activated by benzodiazepines (By similarity). Activated by pentobarbital (PubMed:2561970). Inhibited by the antagonist bicuculline (PubMed:2561970). Inhibited by zinc ions (By similarity). Potentiated by histamine (By similarity).</text>
</comment>
<comment type="subunit">
    <text evidence="2 3 6 7 8 9">Heteropentamer, formed by a combination of alpha (GABRA1-6), beta (GABRB1-3), gamma (GABRG1-3), delta (GABRD), epsilon (GABRE), rho (GABRR1-3), pi (GABRP) and theta (GABRQ) chains, each subunit exhibiting distinct physiological and pharmacological properties (PubMed:2561970, PubMed:30044221). Interacts with GABARAP (By similarity). Interacts with KIF21B (PubMed:25172774). Identified in a complex of 720 kDa composed of LHFPL4, NLGN2, GABRA1, GABRB2, GABRG2 and GABRB3 (PubMed:28279354). Interacts with LHFPL4 (By similarity). Interacts with SHISA7; interaction leads to the regulation of GABA(A) receptor trafficking, channel deactivation kinetics and pharmacology (By similarity).</text>
</comment>
<comment type="subcellular location">
    <subcellularLocation>
        <location evidence="7 10">Postsynaptic cell membrane</location>
        <topology evidence="2">Multi-pass membrane protein</topology>
    </subcellularLocation>
    <subcellularLocation>
        <location evidence="7 10">Cell membrane</location>
        <topology evidence="2">Multi-pass membrane protein</topology>
    </subcellularLocation>
    <subcellularLocation>
        <location evidence="3">Cell projection</location>
        <location evidence="3">Dendrite</location>
    </subcellularLocation>
    <subcellularLocation>
        <location evidence="6">Cytoplasmic vesicle membrane</location>
    </subcellularLocation>
    <text evidence="10">The gamma-2 subunits are present in Golgi synapses and on the extrasynaptic membranes (when associated with alpha-1/6 and beta-2/3 subunits), and in some of the mossy fiber to granule cell synapses (when associated with alpha-6 and beta-2/3 subunits). Present in GABAergic and glutamatergic synapses on granule cells.</text>
</comment>
<comment type="tissue specificity">
    <text evidence="5 6 10">Expressed in brain (at protein level). Expressed in lungs, in alveolar epithelium (PubMed:17003036).</text>
</comment>
<comment type="domain">
    <text evidence="3">The extracellular domain contributes to synaptic contact formation.</text>
</comment>
<comment type="domain">
    <text evidence="2">GABAARs subunits share a common topological structure: a peptide sequence made up of a long extracellular N-terminal, four transmembrane domains, intracellular or cytoplasmic domain located between the third and the fourth transmembrane domains.</text>
</comment>
<comment type="PTM">
    <text evidence="3">Palmitoylated by ZDHHC3/GODZ; required for the accumulation of GABA(A) receptors at the postsynaptic membrane of inhibitory GABAergic synapses.</text>
</comment>
<comment type="PTM">
    <text evidence="3">Glycosylated.</text>
</comment>
<comment type="similarity">
    <text evidence="12">Belongs to the ligand-gated ion channel (TC 1.A.9) family. Gamma-aminobutyric acid receptor (TC 1.A.9.5) subfamily. GABRG2 sub-subfamily.</text>
</comment>
<reference key="1">
    <citation type="journal article" date="1989" name="Neuron">
        <title>Two novel GABAA receptor subunits exist in distinct neuronal subpopulations.</title>
        <authorList>
            <person name="Shivers B.D."/>
            <person name="Killisch I."/>
            <person name="Sprengel R."/>
            <person name="Sontheimer H."/>
            <person name="Koehler M."/>
            <person name="Schofield P.R."/>
            <person name="Seeburg P.H."/>
        </authorList>
    </citation>
    <scope>NUCLEOTIDE SEQUENCE [GENOMIC DNA]</scope>
    <scope>FUNCTION</scope>
    <scope>TRANSPORTER ACTIVITY</scope>
    <scope>SUBCELLULAR LOCATION</scope>
    <scope>SUBUNIT</scope>
    <scope>ACTIVITY REGULATION</scope>
    <source>
        <tissue>Brain</tissue>
    </source>
</reference>
<reference key="2">
    <citation type="journal article" date="1990" name="J. Neurosci.">
        <title>Functional characteristics and sites of gene expression of the alpha 1, beta 1, gamma 2-isoform of the rat GABAA receptor.</title>
        <authorList>
            <person name="Malherbe P."/>
            <person name="Sigel E."/>
            <person name="Baur R."/>
            <person name="Persohn E."/>
            <person name="Richards J.G."/>
            <person name="Mohler H."/>
        </authorList>
    </citation>
    <scope>NUCLEOTIDE SEQUENCE [GENOMIC DNA]</scope>
</reference>
<reference key="3">
    <citation type="journal article" date="1998" name="J. Neurosci.">
        <title>Segregation of different GABAA receptors to synaptic and extrasynaptic membranes of cerebellar granule cells.</title>
        <authorList>
            <person name="Nusser Z."/>
            <person name="Sieghart W."/>
            <person name="Somogyi P."/>
        </authorList>
    </citation>
    <scope>FUNCTION</scope>
    <scope>SUBCELLULAR LOCATION</scope>
    <scope>TISSUE SPECIFICITY</scope>
</reference>
<reference key="4">
    <citation type="journal article" date="2006" name="J. Biol. Chem.">
        <title>A novel function of ionotropic gamma-aminobutyric acid receptors involving alveolar fluid homeostasis.</title>
        <authorList>
            <person name="Jin N."/>
            <person name="Kolliputi N."/>
            <person name="Gou D."/>
            <person name="Weng T."/>
            <person name="Liu L."/>
        </authorList>
    </citation>
    <scope>TISSUE SPECIFICITY</scope>
</reference>
<reference key="5">
    <citation type="journal article" date="2014" name="Eur. J. Cell Biol.">
        <title>The kinesin KIF21B participates in the cell surface delivery of gamma2 subunit-containing GABAA receptors.</title>
        <authorList>
            <person name="Labonte D."/>
            <person name="Thies E."/>
            <person name="Kneussel M."/>
        </authorList>
    </citation>
    <scope>INTERACTION WITH KIF21B</scope>
    <scope>SUBCELLULAR LOCATION</scope>
    <scope>TISSUE SPECIFICITY</scope>
</reference>
<reference key="6">
    <citation type="journal article" date="2017" name="Neuron">
        <title>GARLH family proteins stabilize GABAA receptors at synapses.</title>
        <authorList>
            <person name="Yamasaki T."/>
            <person name="Hoyos-Ramirez E."/>
            <person name="Martenson J.S."/>
            <person name="Morimoto-Tomita M."/>
            <person name="Tomita S."/>
        </authorList>
    </citation>
    <scope>IDENTIFICATION BY MASS SPECTROMETRY</scope>
    <scope>IDENTIFICATION IN A COMPLEX WITH NLGN2; LHFPL4; GABRA1; GABRB2 AND GABRB3</scope>
</reference>
<reference evidence="14 15" key="7">
    <citation type="journal article" date="2018" name="Elife">
        <title>Cryo-EM structure of the benzodiazepine-sensitive alpha1beta1gamma2S tri-heteromeric GABAA receptor in complex with GABA.</title>
        <authorList>
            <person name="Phulera S."/>
            <person name="Zhu H."/>
            <person name="Yu J."/>
            <person name="Claxton D.P."/>
            <person name="Yoder N."/>
            <person name="Yoshioka C."/>
            <person name="Gouaux E."/>
        </authorList>
    </citation>
    <scope>STRUCTURE BY ELECTRON MICROSCOPY (3.10 ANGSTROMS)</scope>
    <scope>FUNCTION</scope>
    <scope>SUBUNIT</scope>
    <scope>INTERACTION WITH GABRA1 AND GABRB1</scope>
    <scope>DISULFIDE BOND</scope>
</reference>
<feature type="signal peptide" evidence="4">
    <location>
        <begin position="1"/>
        <end position="38"/>
    </location>
</feature>
<feature type="chain" id="PRO_0000000479" description="Gamma-aminobutyric acid receptor subunit gamma-2">
    <location>
        <begin position="39"/>
        <end position="466"/>
    </location>
</feature>
<feature type="topological domain" description="Extracellular" evidence="12">
    <location>
        <begin position="39"/>
        <end position="274"/>
    </location>
</feature>
<feature type="transmembrane region" description="Helical" evidence="2">
    <location>
        <begin position="275"/>
        <end position="295"/>
    </location>
</feature>
<feature type="topological domain" description="Cytoplasmic" evidence="12">
    <location>
        <begin position="296"/>
        <end position="301"/>
    </location>
</feature>
<feature type="transmembrane region" description="Helical" evidence="2">
    <location>
        <begin position="302"/>
        <end position="321"/>
    </location>
</feature>
<feature type="topological domain" description="Extracellular" evidence="12">
    <location>
        <begin position="322"/>
        <end position="333"/>
    </location>
</feature>
<feature type="transmembrane region" description="Helical" evidence="2">
    <location>
        <begin position="334"/>
        <end position="358"/>
    </location>
</feature>
<feature type="topological domain" description="Cytoplasmic" evidence="12">
    <location>
        <begin position="359"/>
        <end position="442"/>
    </location>
</feature>
<feature type="transmembrane region" description="Helical" evidence="2">
    <location>
        <begin position="443"/>
        <end position="463"/>
    </location>
</feature>
<feature type="topological domain" description="Extracellular" evidence="12">
    <location>
        <begin position="464"/>
        <end position="466"/>
    </location>
</feature>
<feature type="glycosylation site" description="N-linked (GlcNAc...) asparagine" evidence="4">
    <location>
        <position position="51"/>
    </location>
</feature>
<feature type="glycosylation site" description="N-linked (GlcNAc...) asparagine" evidence="4">
    <location>
        <position position="128"/>
    </location>
</feature>
<feature type="glycosylation site" description="N-linked (GlcNAc...) asparagine" evidence="4">
    <location>
        <position position="246"/>
    </location>
</feature>
<feature type="disulfide bond" evidence="9 14 15">
    <location>
        <begin position="189"/>
        <end position="203"/>
    </location>
</feature>
<feature type="sequence conflict" description="In Ref. 2; no nucleotide entry." evidence="12" ref="2">
    <original>M</original>
    <variation>I</variation>
    <location>
        <position position="22"/>
    </location>
</feature>
<feature type="helix" evidence="16">
    <location>
        <begin position="64"/>
        <end position="70"/>
    </location>
</feature>
<feature type="turn" evidence="16">
    <location>
        <begin position="71"/>
        <end position="75"/>
    </location>
</feature>
<feature type="strand" evidence="16">
    <location>
        <begin position="82"/>
        <end position="87"/>
    </location>
</feature>
<feature type="strand" evidence="16">
    <location>
        <begin position="90"/>
        <end position="103"/>
    </location>
</feature>
<feature type="strand" evidence="16">
    <location>
        <begin position="106"/>
        <end position="121"/>
    </location>
</feature>
<feature type="helix" evidence="16">
    <location>
        <begin position="123"/>
        <end position="125"/>
    </location>
</feature>
<feature type="strand" evidence="16">
    <location>
        <begin position="129"/>
        <end position="136"/>
    </location>
</feature>
<feature type="strand" evidence="16">
    <location>
        <begin position="162"/>
        <end position="164"/>
    </location>
</feature>
<feature type="strand" evidence="16">
    <location>
        <begin position="166"/>
        <end position="172"/>
    </location>
</feature>
<feature type="strand" evidence="16">
    <location>
        <begin position="175"/>
        <end position="188"/>
    </location>
</feature>
<feature type="strand" evidence="16">
    <location>
        <begin position="195"/>
        <end position="198"/>
    </location>
</feature>
<feature type="turn" evidence="16">
    <location>
        <begin position="214"/>
        <end position="216"/>
    </location>
</feature>
<feature type="strand" evidence="16">
    <location>
        <begin position="218"/>
        <end position="225"/>
    </location>
</feature>
<feature type="strand" evidence="16">
    <location>
        <begin position="243"/>
        <end position="246"/>
    </location>
</feature>
<feature type="strand" evidence="16">
    <location>
        <begin position="249"/>
        <end position="252"/>
    </location>
</feature>
<feature type="strand" evidence="16">
    <location>
        <begin position="257"/>
        <end position="260"/>
    </location>
</feature>
<feature type="strand" evidence="16">
    <location>
        <begin position="263"/>
        <end position="267"/>
    </location>
</feature>
<protein>
    <recommendedName>
        <fullName evidence="2">Gamma-aminobutyric acid receptor subunit gamma-2</fullName>
    </recommendedName>
    <alternativeName>
        <fullName evidence="2">GABA(A) receptor subunit gamma-2</fullName>
        <shortName evidence="11">GABAAR subunit gamma-2</shortName>
    </alternativeName>
</protein>
<gene>
    <name evidence="13" type="primary">Gabrg2</name>
</gene>
<sequence>MSSPNTWSTGSTVYSPVFSQKMTLWILLLLSLYPGFTSQKSDDDYEDYASNKTWVLTPKVPEGDVTVILNNLLEGYDNKLRPDIGVKPTLIHTDMYVNSIGPVNAINMEYTIDIFFAQTWYDRRLKFNSTIKVLRLNSNMVGKIWIPDTFFRNSKKADAHWITTPNRMLRIWNDGRVLYTLRLTIDAECQLQLHNFPMDEHSCPLEFSSYGYPREEIVYQWKRSSVEVGDTRSWRLYQFSFVGLRNTTEVVKTTSGDYVVMSVYFDLSRRMGYFTIQTYIPCTLIVVLSWVSFWINKDAVPARTSLGITTVLTMTTLSTIARKSLPKVSYVTAMDLFVSVCFIFVFSALVEYGTLHYFVSNRKPSKDKDKKKKNPAPTIDIRPRSATIQMNNATHLQERDEEYGYECLDGKDCASFFCCFEDCRTGAWRHGRIHIRIAKMDSYARIFFPTAFCLFNLVYWVSYLYL</sequence>
<dbReference type="EMBL" id="L08497">
    <property type="protein sequence ID" value="AAC42036.1"/>
    <property type="molecule type" value="Genomic_DNA"/>
</dbReference>
<dbReference type="PIR" id="JQ0077">
    <property type="entry name" value="JQ0077"/>
</dbReference>
<dbReference type="RefSeq" id="NP_899156.1">
    <property type="nucleotide sequence ID" value="NM_183327.2"/>
</dbReference>
<dbReference type="PDB" id="2PR9">
    <property type="method" value="X-ray"/>
    <property type="resolution" value="2.51 A"/>
    <property type="chains" value="P=400-409"/>
</dbReference>
<dbReference type="PDB" id="6DW0">
    <property type="method" value="EM"/>
    <property type="resolution" value="3.80 A"/>
    <property type="chains" value="D=1-466"/>
</dbReference>
<dbReference type="PDB" id="6DW1">
    <property type="method" value="EM"/>
    <property type="resolution" value="3.10 A"/>
    <property type="chains" value="D=1-466"/>
</dbReference>
<dbReference type="PDBsum" id="2PR9"/>
<dbReference type="PDBsum" id="6DW0"/>
<dbReference type="PDBsum" id="6DW1"/>
<dbReference type="EMDB" id="EMD-8922"/>
<dbReference type="EMDB" id="EMD-8923"/>
<dbReference type="SMR" id="P18508"/>
<dbReference type="BioGRID" id="248326">
    <property type="interactions" value="4"/>
</dbReference>
<dbReference type="ComplexPortal" id="CPX-250">
    <property type="entry name" value="GABA-A receptor, alpha1-beta2-gamma2"/>
</dbReference>
<dbReference type="ComplexPortal" id="CPX-405">
    <property type="entry name" value="GABA-A receptor, alpha6-beta3-gamma2"/>
</dbReference>
<dbReference type="ComplexPortal" id="CPX-409">
    <property type="entry name" value="GABA-A receptor, alpha3-beta3-gamma2"/>
</dbReference>
<dbReference type="ComplexPortal" id="CPX-410">
    <property type="entry name" value="GABA-A receptor, alpha1-beta3-gamma2"/>
</dbReference>
<dbReference type="ComplexPortal" id="CPX-411">
    <property type="entry name" value="GABA-A receptor, alpha5-beta3-gamma2"/>
</dbReference>
<dbReference type="ComplexPortal" id="CPX-412">
    <property type="entry name" value="GABA-A receptor, alpha2-beta3-gamma2"/>
</dbReference>
<dbReference type="CORUM" id="P18508"/>
<dbReference type="FunCoup" id="P18508">
    <property type="interactions" value="394"/>
</dbReference>
<dbReference type="IntAct" id="P18508">
    <property type="interactions" value="3"/>
</dbReference>
<dbReference type="MINT" id="P18508"/>
<dbReference type="STRING" id="10116.ENSRNOP00000072234"/>
<dbReference type="BindingDB" id="P18508"/>
<dbReference type="ChEMBL" id="CHEMBL2095167"/>
<dbReference type="ChEMBL" id="CHEMBL2111327"/>
<dbReference type="ChEMBL" id="CHEMBL2111343"/>
<dbReference type="ChEMBL" id="CHEMBL2111365"/>
<dbReference type="ChEMBL" id="CHEMBL2111374"/>
<dbReference type="ChEMBL" id="CHEMBL3883322"/>
<dbReference type="ChEMBL" id="CHEMBL4296047"/>
<dbReference type="ChEMBL" id="CHEMBL4296048"/>
<dbReference type="ChEMBL" id="CHEMBL4296051"/>
<dbReference type="ChEMBL" id="CHEMBL4296054"/>
<dbReference type="ChEMBL" id="CHEMBL4296062"/>
<dbReference type="ChEMBL" id="CHEMBL5291947"/>
<dbReference type="ChEMBL" id="CHEMBL5291950"/>
<dbReference type="DrugCentral" id="P18508"/>
<dbReference type="GlyCosmos" id="P18508">
    <property type="glycosylation" value="3 sites, No reported glycans"/>
</dbReference>
<dbReference type="GlyGen" id="P18508">
    <property type="glycosylation" value="3 sites"/>
</dbReference>
<dbReference type="iPTMnet" id="P18508"/>
<dbReference type="SwissPalm" id="P18508"/>
<dbReference type="PaxDb" id="10116-ENSRNOP00000004619"/>
<dbReference type="ABCD" id="P18508">
    <property type="antibodies" value="3 sequenced antibodies"/>
</dbReference>
<dbReference type="Ensembl" id="ENSRNOT00000082445.2">
    <property type="protein sequence ID" value="ENSRNOP00000072234.2"/>
    <property type="gene ID" value="ENSRNOG00000003241.7"/>
</dbReference>
<dbReference type="GeneID" id="29709"/>
<dbReference type="KEGG" id="rno:29709"/>
<dbReference type="UCSC" id="RGD:61966">
    <property type="organism name" value="rat"/>
</dbReference>
<dbReference type="AGR" id="RGD:61966"/>
<dbReference type="CTD" id="2566"/>
<dbReference type="RGD" id="61966">
    <property type="gene designation" value="Gabrg2"/>
</dbReference>
<dbReference type="eggNOG" id="KOG3642">
    <property type="taxonomic scope" value="Eukaryota"/>
</dbReference>
<dbReference type="HOGENOM" id="CLU_010920_2_0_1"/>
<dbReference type="InParanoid" id="P18508"/>
<dbReference type="Reactome" id="R-RNO-977443">
    <property type="pathway name" value="GABA receptor activation"/>
</dbReference>
<dbReference type="EvolutionaryTrace" id="P18508"/>
<dbReference type="PRO" id="PR:P18508"/>
<dbReference type="Proteomes" id="UP000002494">
    <property type="component" value="Chromosome 10"/>
</dbReference>
<dbReference type="Bgee" id="ENSRNOG00000003241">
    <property type="expression patterns" value="Expressed in frontal cortex and 2 other cell types or tissues"/>
</dbReference>
<dbReference type="ExpressionAtlas" id="P18508">
    <property type="expression patterns" value="baseline"/>
</dbReference>
<dbReference type="GO" id="GO:0030424">
    <property type="term" value="C:axon"/>
    <property type="evidence" value="ECO:0000266"/>
    <property type="project" value="RGD"/>
</dbReference>
<dbReference type="GO" id="GO:0009986">
    <property type="term" value="C:cell surface"/>
    <property type="evidence" value="ECO:0000314"/>
    <property type="project" value="RGD"/>
</dbReference>
<dbReference type="GO" id="GO:0034707">
    <property type="term" value="C:chloride channel complex"/>
    <property type="evidence" value="ECO:0007669"/>
    <property type="project" value="UniProtKB-KW"/>
</dbReference>
<dbReference type="GO" id="GO:0030659">
    <property type="term" value="C:cytoplasmic vesicle membrane"/>
    <property type="evidence" value="ECO:0007669"/>
    <property type="project" value="UniProtKB-SubCell"/>
</dbReference>
<dbReference type="GO" id="GO:0032590">
    <property type="term" value="C:dendrite membrane"/>
    <property type="evidence" value="ECO:0000314"/>
    <property type="project" value="BHF-UCL"/>
</dbReference>
<dbReference type="GO" id="GO:1902710">
    <property type="term" value="C:GABA receptor complex"/>
    <property type="evidence" value="ECO:0000314"/>
    <property type="project" value="BHF-UCL"/>
</dbReference>
<dbReference type="GO" id="GO:1902711">
    <property type="term" value="C:GABA-A receptor complex"/>
    <property type="evidence" value="ECO:0000250"/>
    <property type="project" value="UniProtKB"/>
</dbReference>
<dbReference type="GO" id="GO:0098982">
    <property type="term" value="C:GABA-ergic synapse"/>
    <property type="evidence" value="ECO:0000314"/>
    <property type="project" value="SynGO"/>
</dbReference>
<dbReference type="GO" id="GO:0098978">
    <property type="term" value="C:glutamatergic synapse"/>
    <property type="evidence" value="ECO:0000314"/>
    <property type="project" value="SynGO"/>
</dbReference>
<dbReference type="GO" id="GO:0060077">
    <property type="term" value="C:inhibitory synapse"/>
    <property type="evidence" value="ECO:0000314"/>
    <property type="project" value="MGI"/>
</dbReference>
<dbReference type="GO" id="GO:0005886">
    <property type="term" value="C:plasma membrane"/>
    <property type="evidence" value="ECO:0000314"/>
    <property type="project" value="UniProtKB"/>
</dbReference>
<dbReference type="GO" id="GO:0098794">
    <property type="term" value="C:postsynapse"/>
    <property type="evidence" value="ECO:0000318"/>
    <property type="project" value="GO_Central"/>
</dbReference>
<dbReference type="GO" id="GO:0099634">
    <property type="term" value="C:postsynaptic specialization membrane"/>
    <property type="evidence" value="ECO:0000314"/>
    <property type="project" value="UniProtKB"/>
</dbReference>
<dbReference type="GO" id="GO:0005254">
    <property type="term" value="F:chloride channel activity"/>
    <property type="evidence" value="ECO:0000314"/>
    <property type="project" value="RGD"/>
</dbReference>
<dbReference type="GO" id="GO:0004890">
    <property type="term" value="F:GABA-A receptor activity"/>
    <property type="evidence" value="ECO:0000314"/>
    <property type="project" value="RGD"/>
</dbReference>
<dbReference type="GO" id="GO:0022851">
    <property type="term" value="F:GABA-gated chloride ion channel activity"/>
    <property type="evidence" value="ECO:0000250"/>
    <property type="project" value="UniProtKB"/>
</dbReference>
<dbReference type="GO" id="GO:0005237">
    <property type="term" value="F:inhibitory extracellular ligand-gated monoatomic ion channel activity"/>
    <property type="evidence" value="ECO:0000304"/>
    <property type="project" value="RGD"/>
</dbReference>
<dbReference type="GO" id="GO:1904315">
    <property type="term" value="F:transmitter-gated monoatomic ion channel activity involved in regulation of postsynaptic membrane potential"/>
    <property type="evidence" value="ECO:0000266"/>
    <property type="project" value="RGD"/>
</dbReference>
<dbReference type="GO" id="GO:0030534">
    <property type="term" value="P:adult behavior"/>
    <property type="evidence" value="ECO:0000266"/>
    <property type="project" value="RGD"/>
</dbReference>
<dbReference type="GO" id="GO:0071420">
    <property type="term" value="P:cellular response to histamine"/>
    <property type="evidence" value="ECO:0000250"/>
    <property type="project" value="UniProtKB"/>
</dbReference>
<dbReference type="GO" id="GO:0071294">
    <property type="term" value="P:cellular response to zinc ion"/>
    <property type="evidence" value="ECO:0000314"/>
    <property type="project" value="RGD"/>
</dbReference>
<dbReference type="GO" id="GO:0007268">
    <property type="term" value="P:chemical synaptic transmission"/>
    <property type="evidence" value="ECO:0000266"/>
    <property type="project" value="RGD"/>
</dbReference>
<dbReference type="GO" id="GO:1902476">
    <property type="term" value="P:chloride transmembrane transport"/>
    <property type="evidence" value="ECO:0000266"/>
    <property type="project" value="RGD"/>
</dbReference>
<dbReference type="GO" id="GO:0006821">
    <property type="term" value="P:chloride transport"/>
    <property type="evidence" value="ECO:0000314"/>
    <property type="project" value="RGD"/>
</dbReference>
<dbReference type="GO" id="GO:0007214">
    <property type="term" value="P:gamma-aminobutyric acid signaling pathway"/>
    <property type="evidence" value="ECO:0000266"/>
    <property type="project" value="RGD"/>
</dbReference>
<dbReference type="GO" id="GO:1904862">
    <property type="term" value="P:inhibitory synapse assembly"/>
    <property type="evidence" value="ECO:0000250"/>
    <property type="project" value="UniProtKB"/>
</dbReference>
<dbReference type="GO" id="GO:0009791">
    <property type="term" value="P:post-embryonic development"/>
    <property type="evidence" value="ECO:0000266"/>
    <property type="project" value="RGD"/>
</dbReference>
<dbReference type="GO" id="GO:0072347">
    <property type="term" value="P:response to anesthetic"/>
    <property type="evidence" value="ECO:0000315"/>
    <property type="project" value="RGD"/>
</dbReference>
<dbReference type="GO" id="GO:0045471">
    <property type="term" value="P:response to ethanol"/>
    <property type="evidence" value="ECO:0000270"/>
    <property type="project" value="RGD"/>
</dbReference>
<dbReference type="GO" id="GO:0051932">
    <property type="term" value="P:synaptic transmission, GABAergic"/>
    <property type="evidence" value="ECO:0000314"/>
    <property type="project" value="BHF-UCL"/>
</dbReference>
<dbReference type="CDD" id="cd19000">
    <property type="entry name" value="LGIC_ECD_GABAAR_G"/>
    <property type="match status" value="1"/>
</dbReference>
<dbReference type="CDD" id="cd19054">
    <property type="entry name" value="LGIC_TM_GABAAR_gamma"/>
    <property type="match status" value="1"/>
</dbReference>
<dbReference type="FunFam" id="2.70.170.10:FF:000003">
    <property type="entry name" value="Putative gamma-aminobutyric acid receptor subunit gamma-2"/>
    <property type="match status" value="1"/>
</dbReference>
<dbReference type="Gene3D" id="2.70.170.10">
    <property type="entry name" value="Neurotransmitter-gated ion-channel ligand-binding domain"/>
    <property type="match status" value="1"/>
</dbReference>
<dbReference type="Gene3D" id="1.20.58.390">
    <property type="entry name" value="Neurotransmitter-gated ion-channel transmembrane domain"/>
    <property type="match status" value="1"/>
</dbReference>
<dbReference type="IDEAL" id="IID50125"/>
<dbReference type="InterPro" id="IPR006028">
    <property type="entry name" value="GABAA/Glycine_rcpt"/>
</dbReference>
<dbReference type="InterPro" id="IPR005439">
    <property type="entry name" value="GABBAg2_rcpt"/>
</dbReference>
<dbReference type="InterPro" id="IPR005437">
    <property type="entry name" value="GABRG-1/4"/>
</dbReference>
<dbReference type="InterPro" id="IPR006202">
    <property type="entry name" value="Neur_chan_lig-bd"/>
</dbReference>
<dbReference type="InterPro" id="IPR036734">
    <property type="entry name" value="Neur_chan_lig-bd_sf"/>
</dbReference>
<dbReference type="InterPro" id="IPR006201">
    <property type="entry name" value="Neur_channel"/>
</dbReference>
<dbReference type="InterPro" id="IPR036719">
    <property type="entry name" value="Neuro-gated_channel_TM_sf"/>
</dbReference>
<dbReference type="InterPro" id="IPR038050">
    <property type="entry name" value="Neuro_actylchol_rec"/>
</dbReference>
<dbReference type="InterPro" id="IPR006029">
    <property type="entry name" value="Neurotrans-gated_channel_TM"/>
</dbReference>
<dbReference type="InterPro" id="IPR018000">
    <property type="entry name" value="Neurotransmitter_ion_chnl_CS"/>
</dbReference>
<dbReference type="NCBIfam" id="TIGR00860">
    <property type="entry name" value="LIC"/>
    <property type="match status" value="1"/>
</dbReference>
<dbReference type="PANTHER" id="PTHR18945">
    <property type="entry name" value="NEUROTRANSMITTER GATED ION CHANNEL"/>
    <property type="match status" value="1"/>
</dbReference>
<dbReference type="Pfam" id="PF02931">
    <property type="entry name" value="Neur_chan_LBD"/>
    <property type="match status" value="1"/>
</dbReference>
<dbReference type="Pfam" id="PF02932">
    <property type="entry name" value="Neur_chan_memb"/>
    <property type="match status" value="2"/>
</dbReference>
<dbReference type="PRINTS" id="PR00253">
    <property type="entry name" value="GABAARECEPTR"/>
</dbReference>
<dbReference type="PRINTS" id="PR01620">
    <property type="entry name" value="GABAARGAMMA"/>
</dbReference>
<dbReference type="PRINTS" id="PR01622">
    <property type="entry name" value="GABAARGAMMA2"/>
</dbReference>
<dbReference type="PRINTS" id="PR00252">
    <property type="entry name" value="NRIONCHANNEL"/>
</dbReference>
<dbReference type="SUPFAM" id="SSF90112">
    <property type="entry name" value="Neurotransmitter-gated ion-channel transmembrane pore"/>
    <property type="match status" value="1"/>
</dbReference>
<dbReference type="SUPFAM" id="SSF63712">
    <property type="entry name" value="Nicotinic receptor ligand binding domain-like"/>
    <property type="match status" value="1"/>
</dbReference>
<dbReference type="PROSITE" id="PS00236">
    <property type="entry name" value="NEUROTR_ION_CHANNEL"/>
    <property type="match status" value="1"/>
</dbReference>
<keyword id="KW-0002">3D-structure</keyword>
<keyword id="KW-1003">Cell membrane</keyword>
<keyword id="KW-0966">Cell projection</keyword>
<keyword id="KW-0868">Chloride</keyword>
<keyword id="KW-0869">Chloride channel</keyword>
<keyword id="KW-0968">Cytoplasmic vesicle</keyword>
<keyword id="KW-1015">Disulfide bond</keyword>
<keyword id="KW-0325">Glycoprotein</keyword>
<keyword id="KW-0407">Ion channel</keyword>
<keyword id="KW-0406">Ion transport</keyword>
<keyword id="KW-0449">Lipoprotein</keyword>
<keyword id="KW-0472">Membrane</keyword>
<keyword id="KW-0564">Palmitate</keyword>
<keyword id="KW-0628">Postsynaptic cell membrane</keyword>
<keyword id="KW-1185">Reference proteome</keyword>
<keyword id="KW-0732">Signal</keyword>
<keyword id="KW-0770">Synapse</keyword>
<keyword id="KW-0812">Transmembrane</keyword>
<keyword id="KW-1133">Transmembrane helix</keyword>
<keyword id="KW-0813">Transport</keyword>
<accession>P18508</accession>